<gene>
    <name type="ORF">NFIA_096740</name>
</gene>
<feature type="chain" id="PRO_0000365834" description="Probable lysosomal cobalamin transporter">
    <location>
        <begin position="1"/>
        <end position="563"/>
    </location>
</feature>
<feature type="transmembrane region" description="Helical" evidence="2">
    <location>
        <begin position="8"/>
        <end position="28"/>
    </location>
</feature>
<feature type="transmembrane region" description="Helical" evidence="2">
    <location>
        <begin position="40"/>
        <end position="60"/>
    </location>
</feature>
<feature type="transmembrane region" description="Helical" evidence="2">
    <location>
        <begin position="95"/>
        <end position="115"/>
    </location>
</feature>
<feature type="transmembrane region" description="Helical" evidence="2">
    <location>
        <begin position="144"/>
        <end position="164"/>
    </location>
</feature>
<feature type="transmembrane region" description="Helical" evidence="2">
    <location>
        <begin position="188"/>
        <end position="208"/>
    </location>
</feature>
<feature type="transmembrane region" description="Helical" evidence="2">
    <location>
        <begin position="314"/>
        <end position="334"/>
    </location>
</feature>
<feature type="transmembrane region" description="Helical" evidence="2">
    <location>
        <begin position="374"/>
        <end position="394"/>
    </location>
</feature>
<feature type="transmembrane region" description="Helical" evidence="2">
    <location>
        <begin position="416"/>
        <end position="436"/>
    </location>
</feature>
<feature type="transmembrane region" description="Helical" evidence="2">
    <location>
        <begin position="506"/>
        <end position="526"/>
    </location>
</feature>
<feature type="region of interest" description="Disordered" evidence="3">
    <location>
        <begin position="537"/>
        <end position="563"/>
    </location>
</feature>
<feature type="compositionally biased region" description="Acidic residues" evidence="3">
    <location>
        <begin position="539"/>
        <end position="551"/>
    </location>
</feature>
<feature type="glycosylation site" description="N-linked (GlcNAc...) asparagine" evidence="2">
    <location>
        <position position="228"/>
    </location>
</feature>
<organism>
    <name type="scientific">Neosartorya fischeri (strain ATCC 1020 / DSM 3700 / CBS 544.65 / FGSC A1164 / JCM 1740 / NRRL 181 / WB 181)</name>
    <name type="common">Aspergillus fischerianus</name>
    <dbReference type="NCBI Taxonomy" id="331117"/>
    <lineage>
        <taxon>Eukaryota</taxon>
        <taxon>Fungi</taxon>
        <taxon>Dikarya</taxon>
        <taxon>Ascomycota</taxon>
        <taxon>Pezizomycotina</taxon>
        <taxon>Eurotiomycetes</taxon>
        <taxon>Eurotiomycetidae</taxon>
        <taxon>Eurotiales</taxon>
        <taxon>Aspergillaceae</taxon>
        <taxon>Aspergillus</taxon>
        <taxon>Aspergillus subgen. Fumigati</taxon>
    </lineage>
</organism>
<dbReference type="EMBL" id="DS027694">
    <property type="protein sequence ID" value="EAW20052.1"/>
    <property type="molecule type" value="Genomic_DNA"/>
</dbReference>
<dbReference type="RefSeq" id="XP_001261949.1">
    <property type="nucleotide sequence ID" value="XM_001261948.1"/>
</dbReference>
<dbReference type="SMR" id="A1DB12"/>
<dbReference type="STRING" id="331117.A1DB12"/>
<dbReference type="EnsemblFungi" id="EAW20052">
    <property type="protein sequence ID" value="EAW20052"/>
    <property type="gene ID" value="NFIA_096740"/>
</dbReference>
<dbReference type="GeneID" id="4588323"/>
<dbReference type="KEGG" id="nfi:NFIA_096740"/>
<dbReference type="VEuPathDB" id="FungiDB:NFIA_096740"/>
<dbReference type="eggNOG" id="ENOG502QQ2T">
    <property type="taxonomic scope" value="Eukaryota"/>
</dbReference>
<dbReference type="HOGENOM" id="CLU_028341_1_0_1"/>
<dbReference type="OMA" id="FWAQFVF"/>
<dbReference type="OrthoDB" id="73273at2759"/>
<dbReference type="Proteomes" id="UP000006702">
    <property type="component" value="Unassembled WGS sequence"/>
</dbReference>
<dbReference type="GO" id="GO:0005774">
    <property type="term" value="C:vacuolar membrane"/>
    <property type="evidence" value="ECO:0007669"/>
    <property type="project" value="TreeGrafter"/>
</dbReference>
<dbReference type="GO" id="GO:0031419">
    <property type="term" value="F:cobalamin binding"/>
    <property type="evidence" value="ECO:0007669"/>
    <property type="project" value="UniProtKB-KW"/>
</dbReference>
<dbReference type="GO" id="GO:0072665">
    <property type="term" value="P:protein localization to vacuole"/>
    <property type="evidence" value="ECO:0007669"/>
    <property type="project" value="TreeGrafter"/>
</dbReference>
<dbReference type="InterPro" id="IPR050854">
    <property type="entry name" value="LMBD1_LysCbl_Transport"/>
</dbReference>
<dbReference type="InterPro" id="IPR006876">
    <property type="entry name" value="LMBR1-like_membr_prot"/>
</dbReference>
<dbReference type="PANTHER" id="PTHR16130:SF2">
    <property type="entry name" value="LYSOSOMAL COBALAMIN TRANSPORT ESCORT PROTEIN LMBD1"/>
    <property type="match status" value="1"/>
</dbReference>
<dbReference type="PANTHER" id="PTHR16130">
    <property type="entry name" value="LYSOSOMAL COBALAMIN TRANSPORTER-RELATED"/>
    <property type="match status" value="1"/>
</dbReference>
<dbReference type="Pfam" id="PF04791">
    <property type="entry name" value="LMBR1"/>
    <property type="match status" value="1"/>
</dbReference>
<protein>
    <recommendedName>
        <fullName>Probable lysosomal cobalamin transporter</fullName>
    </recommendedName>
</protein>
<comment type="function">
    <text evidence="1">Probable lysosomal cobalamin transporter. Required to export cobalamin from lysosomes allowing its conversion to cofactors (By similarity).</text>
</comment>
<comment type="subcellular location">
    <subcellularLocation>
        <location evidence="1">Lysosome membrane</location>
        <topology evidence="1">Multi-pass membrane protein</topology>
    </subcellularLocation>
</comment>
<comment type="similarity">
    <text evidence="4">Belongs to the LIMR family. LMBRD1 subfamily.</text>
</comment>
<name>LMBD1_NEOFI</name>
<reference key="1">
    <citation type="journal article" date="2008" name="PLoS Genet.">
        <title>Genomic islands in the pathogenic filamentous fungus Aspergillus fumigatus.</title>
        <authorList>
            <person name="Fedorova N.D."/>
            <person name="Khaldi N."/>
            <person name="Joardar V.S."/>
            <person name="Maiti R."/>
            <person name="Amedeo P."/>
            <person name="Anderson M.J."/>
            <person name="Crabtree J."/>
            <person name="Silva J.C."/>
            <person name="Badger J.H."/>
            <person name="Albarraq A."/>
            <person name="Angiuoli S."/>
            <person name="Bussey H."/>
            <person name="Bowyer P."/>
            <person name="Cotty P.J."/>
            <person name="Dyer P.S."/>
            <person name="Egan A."/>
            <person name="Galens K."/>
            <person name="Fraser-Liggett C.M."/>
            <person name="Haas B.J."/>
            <person name="Inman J.M."/>
            <person name="Kent R."/>
            <person name="Lemieux S."/>
            <person name="Malavazi I."/>
            <person name="Orvis J."/>
            <person name="Roemer T."/>
            <person name="Ronning C.M."/>
            <person name="Sundaram J.P."/>
            <person name="Sutton G."/>
            <person name="Turner G."/>
            <person name="Venter J.C."/>
            <person name="White O.R."/>
            <person name="Whitty B.R."/>
            <person name="Youngman P."/>
            <person name="Wolfe K.H."/>
            <person name="Goldman G.H."/>
            <person name="Wortman J.R."/>
            <person name="Jiang B."/>
            <person name="Denning D.W."/>
            <person name="Nierman W.C."/>
        </authorList>
    </citation>
    <scope>NUCLEOTIDE SEQUENCE [LARGE SCALE GENOMIC DNA]</scope>
    <source>
        <strain>ATCC 1020 / DSM 3700 / CBS 544.65 / FGSC A1164 / JCM 1740 / NRRL 181 / WB 181</strain>
    </source>
</reference>
<keyword id="KW-0846">Cobalamin</keyword>
<keyword id="KW-0170">Cobalt</keyword>
<keyword id="KW-0325">Glycoprotein</keyword>
<keyword id="KW-0458">Lysosome</keyword>
<keyword id="KW-0472">Membrane</keyword>
<keyword id="KW-1185">Reference proteome</keyword>
<keyword id="KW-0812">Transmembrane</keyword>
<keyword id="KW-1133">Transmembrane helix</keyword>
<keyword id="KW-0813">Transport</keyword>
<accession>A1DB12</accession>
<evidence type="ECO:0000250" key="1"/>
<evidence type="ECO:0000255" key="2"/>
<evidence type="ECO:0000256" key="3">
    <source>
        <dbReference type="SAM" id="MobiDB-lite"/>
    </source>
</evidence>
<evidence type="ECO:0000305" key="4"/>
<proteinExistence type="inferred from homology"/>
<sequence>MPLPWISLIWFAYLIVITVLIVVASVFIHVYQTPRDRSSFVTFMCVFSIAALLATVMLLPVDVALVSSTTSSALGQRKEWATQEEVDKITYSLTVIYYSLYFLDALLCLVGIPFAYFWHEEYDEVAFEAGDQTPCKRFWAATKYTLAFIAVVIALVLVGFFAPMSESQPGHDLGYWRGFLIENRGEHAFTFLLGFVTTIGSCLYVFYTPSGLALLPALFLRRSYSFANQTLVGSTAMQLDFNRERQRQLEGRCGGNSALLSPKDRRELDTLVREERTLIRRQRLIEGRQEEDQSWPVTVYSKLKTILRPFRLLGGFSLFLVGLSTWISLLMTVIDKLINSPCKHHCGYVLSRTNFNPISWLLIQSSRAFPTDYIIFALIVFLFFWGSVVGVVAVGIRFLWIRIFQIRKGHTSPQAMLLATAMLTLITLGLNYSVVMMLAPRYATFGPQTFCDLAPTSSEEQPDCSNHWHLVKPCSEKADSTAADNTCTPSVASTILNRVALNFPLFGALLLWAHFLFLGIYLVILVASLVRSPRLDERQLDEDAEEAEEESLLASTGRSGNPT</sequence>